<protein>
    <recommendedName>
        <fullName>Mitofusin FZO1</fullName>
        <ecNumber evidence="15">3.6.5.-</ecNumber>
    </recommendedName>
    <alternativeName>
        <fullName>Transmembrane GTPase FZO1</fullName>
    </alternativeName>
</protein>
<evidence type="ECO:0000250" key="1">
    <source>
        <dbReference type="UniProtKB" id="Q8IWA4"/>
    </source>
</evidence>
<evidence type="ECO:0000255" key="2"/>
<evidence type="ECO:0000256" key="3">
    <source>
        <dbReference type="SAM" id="MobiDB-lite"/>
    </source>
</evidence>
<evidence type="ECO:0000269" key="4">
    <source>
    </source>
</evidence>
<evidence type="ECO:0000269" key="5">
    <source>
    </source>
</evidence>
<evidence type="ECO:0000269" key="6">
    <source>
    </source>
</evidence>
<evidence type="ECO:0000269" key="7">
    <source>
    </source>
</evidence>
<evidence type="ECO:0000269" key="8">
    <source>
    </source>
</evidence>
<evidence type="ECO:0000269" key="9">
    <source>
    </source>
</evidence>
<evidence type="ECO:0000269" key="10">
    <source>
    </source>
</evidence>
<evidence type="ECO:0000269" key="11">
    <source>
    </source>
</evidence>
<evidence type="ECO:0000269" key="12">
    <source>
    </source>
</evidence>
<evidence type="ECO:0000269" key="13">
    <source>
    </source>
</evidence>
<evidence type="ECO:0000269" key="14">
    <source>
    </source>
</evidence>
<evidence type="ECO:0000269" key="15">
    <source>
    </source>
</evidence>
<evidence type="ECO:0000269" key="16">
    <source>
    </source>
</evidence>
<evidence type="ECO:0000269" key="17">
    <source>
    </source>
</evidence>
<evidence type="ECO:0000269" key="18">
    <source>
    </source>
</evidence>
<evidence type="ECO:0000269" key="19">
    <source>
    </source>
</evidence>
<evidence type="ECO:0000269" key="20">
    <source>
    </source>
</evidence>
<evidence type="ECO:0000269" key="21">
    <source>
    </source>
</evidence>
<evidence type="ECO:0000269" key="22">
    <source>
    </source>
</evidence>
<evidence type="ECO:0000269" key="23">
    <source>
    </source>
</evidence>
<evidence type="ECO:0000269" key="24">
    <source>
    </source>
</evidence>
<evidence type="ECO:0000269" key="25">
    <source>
    </source>
</evidence>
<evidence type="ECO:0000269" key="26">
    <source>
    </source>
</evidence>
<evidence type="ECO:0000305" key="27"/>
<evidence type="ECO:0000305" key="28">
    <source>
    </source>
</evidence>
<dbReference type="EC" id="3.6.5.-" evidence="15"/>
<dbReference type="EMBL" id="Z36048">
    <property type="protein sequence ID" value="CAA85140.1"/>
    <property type="molecule type" value="Genomic_DNA"/>
</dbReference>
<dbReference type="EMBL" id="BK006936">
    <property type="protein sequence ID" value="DAA07293.1"/>
    <property type="molecule type" value="Genomic_DNA"/>
</dbReference>
<dbReference type="PIR" id="S46050">
    <property type="entry name" value="S46050"/>
</dbReference>
<dbReference type="RefSeq" id="NP_009738.1">
    <property type="nucleotide sequence ID" value="NM_001178527.1"/>
</dbReference>
<dbReference type="BioGRID" id="32877">
    <property type="interactions" value="161"/>
</dbReference>
<dbReference type="ComplexPortal" id="CPX-161">
    <property type="entry name" value="FZO1-MGM1-UGO1 complex"/>
</dbReference>
<dbReference type="DIP" id="DIP-5581N"/>
<dbReference type="FunCoup" id="P38297">
    <property type="interactions" value="122"/>
</dbReference>
<dbReference type="IntAct" id="P38297">
    <property type="interactions" value="7"/>
</dbReference>
<dbReference type="MINT" id="P38297"/>
<dbReference type="STRING" id="4932.YBR179C"/>
<dbReference type="TCDB" id="1.N.6.1.1">
    <property type="family name" value="the mitochondrial inner/outer membrane fusion (mmf) family"/>
</dbReference>
<dbReference type="iPTMnet" id="P38297"/>
<dbReference type="PaxDb" id="4932-YBR179C"/>
<dbReference type="PeptideAtlas" id="P38297"/>
<dbReference type="TopDownProteomics" id="P38297"/>
<dbReference type="EnsemblFungi" id="YBR179C_mRNA">
    <property type="protein sequence ID" value="YBR179C"/>
    <property type="gene ID" value="YBR179C"/>
</dbReference>
<dbReference type="GeneID" id="852477"/>
<dbReference type="KEGG" id="sce:YBR179C"/>
<dbReference type="AGR" id="SGD:S000000383"/>
<dbReference type="SGD" id="S000000383">
    <property type="gene designation" value="FZO1"/>
</dbReference>
<dbReference type="VEuPathDB" id="FungiDB:YBR179C"/>
<dbReference type="eggNOG" id="KOG0448">
    <property type="taxonomic scope" value="Eukaryota"/>
</dbReference>
<dbReference type="GeneTree" id="ENSGT00390000013727"/>
<dbReference type="HOGENOM" id="CLU_011752_0_0_1"/>
<dbReference type="InParanoid" id="P38297"/>
<dbReference type="OMA" id="RCERMIL"/>
<dbReference type="OrthoDB" id="9984778at2759"/>
<dbReference type="BioCyc" id="YEAST:G3O-29123-MONOMER"/>
<dbReference type="Reactome" id="R-SCE-5205685">
    <property type="pathway name" value="PINK1-PRKN Mediated Mitophagy"/>
</dbReference>
<dbReference type="Reactome" id="R-SCE-9013419">
    <property type="pathway name" value="RHOT2 GTPase cycle"/>
</dbReference>
<dbReference type="Reactome" id="R-SCE-983231">
    <property type="pathway name" value="Factors involved in megakaryocyte development and platelet production"/>
</dbReference>
<dbReference type="BioGRID-ORCS" id="852477">
    <property type="hits" value="3 hits in 10 CRISPR screens"/>
</dbReference>
<dbReference type="PRO" id="PR:P38297"/>
<dbReference type="Proteomes" id="UP000002311">
    <property type="component" value="Chromosome II"/>
</dbReference>
<dbReference type="RNAct" id="P38297">
    <property type="molecule type" value="protein"/>
</dbReference>
<dbReference type="GO" id="GO:0031966">
    <property type="term" value="C:mitochondrial membrane"/>
    <property type="evidence" value="ECO:0000314"/>
    <property type="project" value="UniProtKB"/>
</dbReference>
<dbReference type="GO" id="GO:0005741">
    <property type="term" value="C:mitochondrial outer membrane"/>
    <property type="evidence" value="ECO:0000314"/>
    <property type="project" value="SGD"/>
</dbReference>
<dbReference type="GO" id="GO:0005739">
    <property type="term" value="C:mitochondrion"/>
    <property type="evidence" value="ECO:0000314"/>
    <property type="project" value="ComplexPortal"/>
</dbReference>
<dbReference type="GO" id="GO:0160189">
    <property type="term" value="C:peroxisomal-mitochondrial contact site"/>
    <property type="evidence" value="ECO:0000314"/>
    <property type="project" value="SGD"/>
</dbReference>
<dbReference type="GO" id="GO:0005777">
    <property type="term" value="C:peroxisome"/>
    <property type="evidence" value="ECO:0000314"/>
    <property type="project" value="SGD"/>
</dbReference>
<dbReference type="GO" id="GO:0005525">
    <property type="term" value="F:GTP binding"/>
    <property type="evidence" value="ECO:0007669"/>
    <property type="project" value="UniProtKB-KW"/>
</dbReference>
<dbReference type="GO" id="GO:0003924">
    <property type="term" value="F:GTPase activity"/>
    <property type="evidence" value="ECO:0000314"/>
    <property type="project" value="SGD"/>
</dbReference>
<dbReference type="GO" id="GO:0160190">
    <property type="term" value="F:peroxisome-mitochondrion membrane tether activity"/>
    <property type="evidence" value="ECO:0000314"/>
    <property type="project" value="SGD"/>
</dbReference>
<dbReference type="GO" id="GO:0048312">
    <property type="term" value="P:intracellular distribution of mitochondria"/>
    <property type="evidence" value="ECO:0000316"/>
    <property type="project" value="SGD"/>
</dbReference>
<dbReference type="GO" id="GO:0008053">
    <property type="term" value="P:mitochondrial fusion"/>
    <property type="evidence" value="ECO:0000315"/>
    <property type="project" value="SGD"/>
</dbReference>
<dbReference type="GO" id="GO:1990627">
    <property type="term" value="P:mitochondrial inner membrane fusion"/>
    <property type="evidence" value="ECO:0000315"/>
    <property type="project" value="ComplexPortal"/>
</dbReference>
<dbReference type="GO" id="GO:1990626">
    <property type="term" value="P:mitochondrial outer membrane fusion"/>
    <property type="evidence" value="ECO:0000315"/>
    <property type="project" value="ComplexPortal"/>
</dbReference>
<dbReference type="GO" id="GO:0051646">
    <property type="term" value="P:mitochondrion localization"/>
    <property type="evidence" value="ECO:0000318"/>
    <property type="project" value="GO_Central"/>
</dbReference>
<dbReference type="FunFam" id="3.40.50.300:FF:000638">
    <property type="entry name" value="Transmembrane GTPase Fzo1, putative"/>
    <property type="match status" value="1"/>
</dbReference>
<dbReference type="Gene3D" id="3.40.50.300">
    <property type="entry name" value="P-loop containing nucleotide triphosphate hydrolases"/>
    <property type="match status" value="1"/>
</dbReference>
<dbReference type="InterPro" id="IPR045063">
    <property type="entry name" value="Dynamin_N"/>
</dbReference>
<dbReference type="InterPro" id="IPR030381">
    <property type="entry name" value="G_DYNAMIN_dom"/>
</dbReference>
<dbReference type="InterPro" id="IPR027094">
    <property type="entry name" value="Mitofusin_fam"/>
</dbReference>
<dbReference type="InterPro" id="IPR027417">
    <property type="entry name" value="P-loop_NTPase"/>
</dbReference>
<dbReference type="PANTHER" id="PTHR10465:SF0">
    <property type="entry name" value="SARCALUMENIN"/>
    <property type="match status" value="1"/>
</dbReference>
<dbReference type="PANTHER" id="PTHR10465">
    <property type="entry name" value="TRANSMEMBRANE GTPASE FZO1"/>
    <property type="match status" value="1"/>
</dbReference>
<dbReference type="Pfam" id="PF00350">
    <property type="entry name" value="Dynamin_N"/>
    <property type="match status" value="1"/>
</dbReference>
<dbReference type="SUPFAM" id="SSF52540">
    <property type="entry name" value="P-loop containing nucleoside triphosphate hydrolases"/>
    <property type="match status" value="1"/>
</dbReference>
<dbReference type="PROSITE" id="PS51718">
    <property type="entry name" value="G_DYNAMIN_2"/>
    <property type="match status" value="1"/>
</dbReference>
<name>FZO1_YEAST</name>
<reference key="1">
    <citation type="journal article" date="1994" name="EMBO J.">
        <title>Complete DNA sequence of yeast chromosome II.</title>
        <authorList>
            <person name="Feldmann H."/>
            <person name="Aigle M."/>
            <person name="Aljinovic G."/>
            <person name="Andre B."/>
            <person name="Baclet M.C."/>
            <person name="Barthe C."/>
            <person name="Baur A."/>
            <person name="Becam A.-M."/>
            <person name="Biteau N."/>
            <person name="Boles E."/>
            <person name="Brandt T."/>
            <person name="Brendel M."/>
            <person name="Brueckner M."/>
            <person name="Bussereau F."/>
            <person name="Christiansen C."/>
            <person name="Contreras R."/>
            <person name="Crouzet M."/>
            <person name="Cziepluch C."/>
            <person name="Demolis N."/>
            <person name="Delaveau T."/>
            <person name="Doignon F."/>
            <person name="Domdey H."/>
            <person name="Duesterhus S."/>
            <person name="Dubois E."/>
            <person name="Dujon B."/>
            <person name="El Bakkoury M."/>
            <person name="Entian K.-D."/>
            <person name="Feuermann M."/>
            <person name="Fiers W."/>
            <person name="Fobo G.M."/>
            <person name="Fritz C."/>
            <person name="Gassenhuber J."/>
            <person name="Glansdorff N."/>
            <person name="Goffeau A."/>
            <person name="Grivell L.A."/>
            <person name="de Haan M."/>
            <person name="Hein C."/>
            <person name="Herbert C.J."/>
            <person name="Hollenberg C.P."/>
            <person name="Holmstroem K."/>
            <person name="Jacq C."/>
            <person name="Jacquet M."/>
            <person name="Jauniaux J.-C."/>
            <person name="Jonniaux J.-L."/>
            <person name="Kallesoee T."/>
            <person name="Kiesau P."/>
            <person name="Kirchrath L."/>
            <person name="Koetter P."/>
            <person name="Korol S."/>
            <person name="Liebl S."/>
            <person name="Logghe M."/>
            <person name="Lohan A.J.E."/>
            <person name="Louis E.J."/>
            <person name="Li Z.Y."/>
            <person name="Maat M.J."/>
            <person name="Mallet L."/>
            <person name="Mannhaupt G."/>
            <person name="Messenguy F."/>
            <person name="Miosga T."/>
            <person name="Molemans F."/>
            <person name="Mueller S."/>
            <person name="Nasr F."/>
            <person name="Obermaier B."/>
            <person name="Perea J."/>
            <person name="Pierard A."/>
            <person name="Piravandi E."/>
            <person name="Pohl F.M."/>
            <person name="Pohl T.M."/>
            <person name="Potier S."/>
            <person name="Proft M."/>
            <person name="Purnelle B."/>
            <person name="Ramezani Rad M."/>
            <person name="Rieger M."/>
            <person name="Rose M."/>
            <person name="Schaaff-Gerstenschlaeger I."/>
            <person name="Scherens B."/>
            <person name="Schwarzlose C."/>
            <person name="Skala J."/>
            <person name="Slonimski P.P."/>
            <person name="Smits P.H.M."/>
            <person name="Souciet J.-L."/>
            <person name="Steensma H.Y."/>
            <person name="Stucka R."/>
            <person name="Urrestarazu L.A."/>
            <person name="van der Aart Q.J.M."/>
            <person name="Van Dyck L."/>
            <person name="Vassarotti A."/>
            <person name="Vetter I."/>
            <person name="Vierendeels F."/>
            <person name="Vissers S."/>
            <person name="Wagner G."/>
            <person name="de Wergifosse P."/>
            <person name="Wolfe K.H."/>
            <person name="Zagulski M."/>
            <person name="Zimmermann F.K."/>
            <person name="Mewes H.-W."/>
            <person name="Kleine K."/>
        </authorList>
    </citation>
    <scope>NUCLEOTIDE SEQUENCE [LARGE SCALE GENOMIC DNA]</scope>
    <source>
        <strain>ATCC 204508 / S288c</strain>
    </source>
</reference>
<reference key="2">
    <citation type="journal article" date="2014" name="G3 (Bethesda)">
        <title>The reference genome sequence of Saccharomyces cerevisiae: Then and now.</title>
        <authorList>
            <person name="Engel S.R."/>
            <person name="Dietrich F.S."/>
            <person name="Fisk D.G."/>
            <person name="Binkley G."/>
            <person name="Balakrishnan R."/>
            <person name="Costanzo M.C."/>
            <person name="Dwight S.S."/>
            <person name="Hitz B.C."/>
            <person name="Karra K."/>
            <person name="Nash R.S."/>
            <person name="Weng S."/>
            <person name="Wong E.D."/>
            <person name="Lloyd P."/>
            <person name="Skrzypek M.S."/>
            <person name="Miyasato S.R."/>
            <person name="Simison M."/>
            <person name="Cherry J.M."/>
        </authorList>
    </citation>
    <scope>GENOME REANNOTATION</scope>
    <source>
        <strain>ATCC 204508 / S288c</strain>
    </source>
</reference>
<reference key="3">
    <citation type="journal article" date="1998" name="J. Biol. Chem.">
        <title>Fzo1p is a mitochondrial outer membrane protein essential for the biogenesis of functional mitochondria in Saccharomyces cerevisiae.</title>
        <authorList>
            <person name="Rapaport D."/>
            <person name="Brunner M."/>
            <person name="Neupert W."/>
            <person name="Westermann B."/>
        </authorList>
    </citation>
    <scope>FUNCTION</scope>
    <scope>SUBCELLULAR LOCATION</scope>
    <scope>SUBUNIT</scope>
</reference>
<reference key="4">
    <citation type="journal article" date="1998" name="J. Cell Biol.">
        <title>Mitochondrial fusion in yeast requires the transmembrane GTPase Fzo1p.</title>
        <authorList>
            <person name="Hermann G.J."/>
            <person name="Thatcher J.W."/>
            <person name="Mills J.P."/>
            <person name="Hales K.G."/>
            <person name="Fuller M.T."/>
            <person name="Nunnari J."/>
            <person name="Shaw J.M."/>
        </authorList>
    </citation>
    <scope>FUNCTION</scope>
    <scope>SUBCELLULAR LOCATION</scope>
    <scope>MUTAGENESIS OF LYS-200; SER-201; THR-221 AND LYS-371</scope>
</reference>
<reference key="5">
    <citation type="journal article" date="1999" name="J. Cell Biol.">
        <title>Division versus fusion: Dnm1p and Fzo1p antagonistically regulate mitochondrial shape.</title>
        <authorList>
            <person name="Sesaki H."/>
            <person name="Jensen R.E."/>
        </authorList>
    </citation>
    <scope>FUNCTION</scope>
</reference>
<reference key="6">
    <citation type="journal article" date="2001" name="J. Cell Biol.">
        <title>Connection of the mitochondrial outer and inner membranes by Fzo1 is critical for organellar fusion.</title>
        <authorList>
            <person name="Fritz S."/>
            <person name="Rapaport D."/>
            <person name="Klanner E."/>
            <person name="Neupert W."/>
            <person name="Westermann B."/>
        </authorList>
    </citation>
    <scope>FUNCTION</scope>
    <scope>SUBCELLULAR LOCATION</scope>
    <scope>TOPOLOGY</scope>
</reference>
<reference key="7">
    <citation type="journal article" date="2003" name="Mol. Biol. Cell">
        <title>Mgm1p, a dynamin-related GTPase, is essential for fusion of the mitochondrial outer membrane.</title>
        <authorList>
            <person name="Sesaki H."/>
            <person name="Southard S.M."/>
            <person name="Yaffe M.P."/>
            <person name="Jensen R.E."/>
        </authorList>
    </citation>
    <scope>INTERACTION WITH MGM1 AND UGO1</scope>
</reference>
<reference key="8">
    <citation type="journal article" date="2003" name="Nature">
        <title>Global analysis of protein localization in budding yeast.</title>
        <authorList>
            <person name="Huh W.-K."/>
            <person name="Falvo J.V."/>
            <person name="Gerke L.C."/>
            <person name="Carroll A.S."/>
            <person name="Howson R.W."/>
            <person name="Weissman J.S."/>
            <person name="O'Shea E.K."/>
        </authorList>
    </citation>
    <scope>SUBCELLULAR LOCATION [LARGE SCALE ANALYSIS]</scope>
</reference>
<reference key="9">
    <citation type="journal article" date="2003" name="Nature">
        <title>Global analysis of protein expression in yeast.</title>
        <authorList>
            <person name="Ghaemmaghami S."/>
            <person name="Huh W.-K."/>
            <person name="Bower K."/>
            <person name="Howson R.W."/>
            <person name="Belle A."/>
            <person name="Dephoure N."/>
            <person name="O'Shea E.K."/>
            <person name="Weissman J.S."/>
        </authorList>
    </citation>
    <scope>LEVEL OF PROTEIN EXPRESSION [LARGE SCALE ANALYSIS]</scope>
</reference>
<reference key="10">
    <citation type="journal article" date="2004" name="J. Biol. Chem.">
        <title>Ugo1p links the Fzo1p and Mgm1p GTPases for mitochondrial fusion.</title>
        <authorList>
            <person name="Sesaki H."/>
            <person name="Jensen R.E."/>
        </authorList>
    </citation>
    <scope>INTERACTION WITH UGO1 AND MGM1</scope>
</reference>
<reference key="11">
    <citation type="journal article" date="2004" name="Science">
        <title>Mitochondrial fusion intermediates revealed in vitro.</title>
        <authorList>
            <person name="Meeusen S."/>
            <person name="McCaffery J.M."/>
            <person name="Nunnari J."/>
        </authorList>
    </citation>
    <scope>FUNCTION</scope>
</reference>
<reference key="12">
    <citation type="journal article" date="2005" name="J. Biol. Chem.">
        <title>Instability of the mitofusin Fzo1 regulates mitochondrial morphology during the mating response of the yeast Saccharomyces cerevisiae.</title>
        <authorList>
            <person name="Neutzner A."/>
            <person name="Youle R.J."/>
        </authorList>
    </citation>
    <scope>FUNCTION</scope>
    <scope>PROTEIN DEGRADATION</scope>
</reference>
<reference key="13">
    <citation type="journal article" date="2006" name="J. Biol. Chem.">
        <title>Domain interactions within Fzo1 oligomers are essential for mitochondrial fusion.</title>
        <authorList>
            <person name="Griffin E.E."/>
            <person name="Chan D.C."/>
        </authorList>
    </citation>
    <scope>FUNCTION</scope>
    <scope>DOMAIN</scope>
    <scope>SUBUNIT</scope>
    <scope>MUTAGENESIS OF VAL-172; LYS-200; SER-201; THR-221; TYR-490; LEU-501; LEU-504; LEU-518; LYS-538; TYR-769; LEU-773 AND LEU-819</scope>
</reference>
<reference key="14">
    <citation type="journal article" date="2006" name="J. Cell Biol.">
        <title>Regulation of mitochondrial fusion by the F-box protein Mdm30 involves proteasome-independent turnover of Fzo1.</title>
        <authorList>
            <person name="Escobar-Henriques M."/>
            <person name="Westermann B."/>
            <person name="Langer T."/>
        </authorList>
    </citation>
    <scope>INTERACTION WITH MDM30</scope>
</reference>
<reference key="15">
    <citation type="journal article" date="2008" name="Mol. Biol. Cell">
        <title>Ubiquitin-proteasome-dependent degradation of a mitofusin, a critical regulator of mitochondrial fusion.</title>
        <authorList>
            <person name="Cohen M.M."/>
            <person name="Leboucher G.P."/>
            <person name="Livnat-Levanon N."/>
            <person name="Glickman M.H."/>
            <person name="Weissman A.M."/>
        </authorList>
    </citation>
    <scope>UBIQUITINATION BY MDM30</scope>
</reference>
<reference key="16">
    <citation type="journal article" date="2009" name="Mol. Biol. Cell">
        <title>A mutation associated with CMT2A neuropathy causes defects in Fzo1 GTP hydrolysis, ubiquitylation, and protein turnover.</title>
        <authorList>
            <person name="Amiott E.A."/>
            <person name="Cohen M.M."/>
            <person name="Saint-Georges Y."/>
            <person name="Weissman A.M."/>
            <person name="Shaw J.M."/>
        </authorList>
    </citation>
    <scope>FUNCTION</scope>
    <scope>CATALYTIC ACTIVITY</scope>
    <scope>SUBUNIT</scope>
    <scope>UBIQUITINATION</scope>
    <scope>MUTAGENESIS OF VAL-196 AND VAL-327</scope>
</reference>
<reference key="17">
    <citation type="journal article" date="2009" name="Science">
        <title>Global analysis of Cdk1 substrate phosphorylation sites provides insights into evolution.</title>
        <authorList>
            <person name="Holt L.J."/>
            <person name="Tuch B.B."/>
            <person name="Villen J."/>
            <person name="Johnson A.D."/>
            <person name="Gygi S.P."/>
            <person name="Morgan D.O."/>
        </authorList>
    </citation>
    <scope>IDENTIFICATION BY MASS SPECTROMETRY [LARGE SCALE ANALYSIS]</scope>
</reference>
<reference key="18">
    <citation type="journal article" date="2010" name="Aging Cell">
        <title>Acetyl-L-carnitine protects yeast cells from apoptosis and aging and inhibits mitochondrial fission.</title>
        <authorList>
            <person name="Palermo V."/>
            <person name="Falcone C."/>
            <person name="Calvani M."/>
            <person name="Mazzoni C."/>
        </authorList>
    </citation>
    <scope>FUNCTION</scope>
</reference>
<reference key="19">
    <citation type="journal article" date="2010" name="Mol. Biol. Cell">
        <title>Mdm36 is a mitochondrial fission-promoting protein in Saccharomyces cerevisiae.</title>
        <authorList>
            <person name="Hammermeister M."/>
            <person name="Schodel K."/>
            <person name="Westermann B."/>
        </authorList>
    </citation>
    <scope>FUNCTION</scope>
</reference>
<reference key="20">
    <citation type="journal article" date="2011" name="J. Cell Sci.">
        <title>Ugo1 and Mdm30 act sequentially during Fzo1-mediated mitochondrial outer membrane fusion.</title>
        <authorList>
            <person name="Anton F."/>
            <person name="Fres J.M."/>
            <person name="Schauss A."/>
            <person name="Pinson B."/>
            <person name="Praefcke G.J."/>
            <person name="Langer T."/>
            <person name="Escobar-Henriques M."/>
        </authorList>
    </citation>
    <scope>SUBUNIT</scope>
    <scope>FUNCTION</scope>
    <scope>MUTAGENESIS OF ASP-195; ASN-197; LYS-200; SER-201; THR-221 AND ASP-320</scope>
    <scope>INTERACTION WITH MDM30</scope>
    <scope>UBIQUITINATION</scope>
</reference>
<reference key="21">
    <citation type="journal article" date="2011" name="J. Cell Sci.">
        <title>Sequential requirements for the GTPase domain of the mitofusin Fzo1 and the ubiquitin ligase SCFMdm30 in mitochondrial outer membrane fusion.</title>
        <authorList>
            <person name="Cohen M.M."/>
            <person name="Amiott E.A."/>
            <person name="Day A.R."/>
            <person name="Leboucher G.P."/>
            <person name="Pryce E.N."/>
            <person name="Glickman M.H."/>
            <person name="McCaffery J.M."/>
            <person name="Shaw J.M."/>
            <person name="Weissman A.M."/>
        </authorList>
    </citation>
    <scope>FUNCTION</scope>
    <scope>MUTAGENESIS OF LYS-200; SER-201 AND THR-221</scope>
    <scope>INTERACTION WITH MDM30</scope>
    <scope>UBIQUITINATION BY MDM30</scope>
</reference>
<reference key="22">
    <citation type="journal article" date="2012" name="Mitochondrion">
        <title>Glucose levels regulate the nucleo-mitochondrial distribution of Mig2.</title>
        <authorList>
            <person name="Fernandez-Cid A."/>
            <person name="Riera A."/>
            <person name="Herrero P."/>
            <person name="Moreno F."/>
        </authorList>
    </citation>
    <scope>FUNCTION</scope>
</reference>
<reference key="23">
    <citation type="journal article" date="2013" name="Mol. Cell">
        <title>Two deubiquitylases act on mitofusin and regulate mitochondrial fusion along independent pathways.</title>
        <authorList>
            <person name="Anton F."/>
            <person name="Dittmar G."/>
            <person name="Langer T."/>
            <person name="Escobar-Henriques M."/>
        </authorList>
    </citation>
    <scope>FUNCTION</scope>
    <scope>UBIQUITINATION AT LYS-398 AND LYS-464</scope>
    <scope>INTERACTION WITH UBP2 AND UBP12</scope>
    <scope>DEUBIQUITINATION BY UBP2 AND UBP12</scope>
    <scope>MUTAGENESIS OF LYS-398 AND LYS-464</scope>
</reference>
<reference key="24">
    <citation type="journal article" date="2016" name="Elife">
        <title>A mitofusin-dependent docking ring complex triggers mitochondrial fusion in vitro.</title>
        <authorList>
            <person name="Brandt T."/>
            <person name="Cavellini L."/>
            <person name="Kuehlbrandt W."/>
            <person name="Cohen M.M."/>
        </authorList>
    </citation>
    <scope>FUNCTION</scope>
    <scope>SUBCELLULAR LOCATION</scope>
</reference>
<reference key="25">
    <citation type="journal article" date="2016" name="J. Cell Biol.">
        <title>Doa1 targets ubiquitinated substrates for mitochondria-associated degradation.</title>
        <authorList>
            <person name="Wu X."/>
            <person name="Li L."/>
            <person name="Jiang H."/>
        </authorList>
    </citation>
    <scope>INTERACTION WITH DOA1</scope>
    <scope>SUBCELLULAR LOCATION</scope>
    <scope>UBIQUITINATION</scope>
</reference>
<reference key="26">
    <citation type="journal article" date="2017" name="Sci. Rep.">
        <title>A membrane-inserted structural model of the yeast mitofusin Fzo1.</title>
        <authorList>
            <person name="De Vecchis D."/>
            <person name="Cavellini L."/>
            <person name="Baaden M."/>
            <person name="Henin J."/>
            <person name="Cohen M.M."/>
            <person name="Taly A."/>
        </authorList>
    </citation>
    <scope>TOPOLOGY</scope>
    <scope>MUTAGENESIS OF LYS-200; ASP-313; ASP-335; LYS-464; TYR-490; ASP-523; HIS-780; GLU-818 AND LEU-819</scope>
</reference>
<feature type="chain" id="PRO_0000127682" description="Mitofusin FZO1">
    <location>
        <begin position="1"/>
        <end position="855"/>
    </location>
</feature>
<feature type="topological domain" description="Cytoplasmic" evidence="5">
    <location>
        <begin position="1"/>
        <end position="705"/>
    </location>
</feature>
<feature type="transmembrane region" description="Helical; Name=1" evidence="28">
    <location>
        <begin position="706"/>
        <end position="726"/>
    </location>
</feature>
<feature type="topological domain" description="Mitochondrial intermembrane" evidence="5">
    <location>
        <begin position="727"/>
        <end position="736"/>
    </location>
</feature>
<feature type="transmembrane region" description="Helical; Name=2" evidence="28">
    <location>
        <begin position="737"/>
        <end position="757"/>
    </location>
</feature>
<feature type="topological domain" description="Cytoplasmic" evidence="5">
    <location>
        <begin position="758"/>
        <end position="855"/>
    </location>
</feature>
<feature type="domain" description="Dynamin-type G" evidence="2">
    <location>
        <begin position="184"/>
        <end position="467"/>
    </location>
</feature>
<feature type="region of interest" description="Disordered" evidence="3">
    <location>
        <begin position="1"/>
        <end position="27"/>
    </location>
</feature>
<feature type="region of interest" description="HRN" evidence="28">
    <location>
        <begin position="91"/>
        <end position="190"/>
    </location>
</feature>
<feature type="region of interest" description="Disordered" evidence="3">
    <location>
        <begin position="413"/>
        <end position="447"/>
    </location>
</feature>
<feature type="region of interest" description="HR1" evidence="28">
    <location>
        <begin position="484"/>
        <end position="547"/>
    </location>
</feature>
<feature type="region of interest" description="Required for interaction with UGO1">
    <location>
        <begin position="630"/>
        <end position="843"/>
    </location>
</feature>
<feature type="region of interest" description="HR2" evidence="28">
    <location>
        <begin position="769"/>
        <end position="831"/>
    </location>
</feature>
<feature type="coiled-coil region" evidence="2">
    <location>
        <begin position="798"/>
        <end position="825"/>
    </location>
</feature>
<feature type="compositionally biased region" description="Basic and acidic residues" evidence="3">
    <location>
        <begin position="1"/>
        <end position="19"/>
    </location>
</feature>
<feature type="compositionally biased region" description="Basic and acidic residues" evidence="3">
    <location>
        <begin position="413"/>
        <end position="433"/>
    </location>
</feature>
<feature type="binding site" evidence="1">
    <location>
        <begin position="197"/>
        <end position="202"/>
    </location>
    <ligand>
        <name>GTP</name>
        <dbReference type="ChEBI" id="CHEBI:37565"/>
    </ligand>
</feature>
<feature type="binding site" evidence="1">
    <location>
        <begin position="370"/>
        <end position="373"/>
    </location>
    <ligand>
        <name>GTP</name>
        <dbReference type="ChEBI" id="CHEBI:37565"/>
    </ligand>
</feature>
<feature type="binding site" evidence="1">
    <location>
        <position position="408"/>
    </location>
    <ligand>
        <name>GTP</name>
        <dbReference type="ChEBI" id="CHEBI:37565"/>
    </ligand>
</feature>
<feature type="cross-link" description="Glycyl lysine isopeptide (Lys-Gly) (interchain with G-Cter in ubiquitin)" evidence="21">
    <location>
        <position position="398"/>
    </location>
</feature>
<feature type="cross-link" description="Glycyl lysine isopeptide (Lys-Gly) (interchain with G-Cter in ubiquitin)" evidence="21">
    <location>
        <position position="464"/>
    </location>
</feature>
<feature type="mutagenesis site" description="Abolishes fusion function." evidence="12">
    <original>V</original>
    <variation>P</variation>
    <location>
        <position position="172"/>
    </location>
</feature>
<feature type="mutagenesis site" description="Abolishes fusion function." evidence="18">
    <original>D</original>
    <variation>A</variation>
    <location>
        <position position="195"/>
    </location>
</feature>
<feature type="mutagenesis site" description="Leads to an unusual intermediate mitochondrial morphology described as disorganized tubules in which mitochondria are tubular, distorted, less branched, and poorly distributed throughout the cell." evidence="15">
    <original>V</original>
    <variation>M</variation>
    <location>
        <position position="196"/>
    </location>
</feature>
<feature type="mutagenesis site" description="Abolishes fusion function." evidence="18">
    <original>N</original>
    <variation>A</variation>
    <location>
        <position position="197"/>
    </location>
</feature>
<feature type="mutagenesis site" description="Abolishes fusion function, MDM30-binding and MDM30-dependent ubiquitination. No effect on localization or interaction with UGO1." evidence="12 18 19 24 26">
    <original>K</original>
    <variation>A</variation>
    <location>
        <position position="200"/>
    </location>
</feature>
<feature type="mutagenesis site" description="Abolishes respiratory growth." evidence="24">
    <original>K</original>
    <variation>D</variation>
    <location>
        <position position="200"/>
    </location>
</feature>
<feature type="mutagenesis site" description="No effect." evidence="24">
    <original>K</original>
    <variation>R</variation>
    <location>
        <position position="200"/>
    </location>
</feature>
<feature type="mutagenesis site" description="Abolishes fusion function, MDM30-binding and MDM30-dependent ubiquitination, but not localization to mitochondrial outer membrane." evidence="12 18 19 26">
    <original>S</original>
    <variation>N</variation>
    <location>
        <position position="201"/>
    </location>
</feature>
<feature type="mutagenesis site" description="Abolishes fusion function, MDM30-binding and MDM30-dependent ubiquitination, but not localization to mitochondrial outer membrane." evidence="12 18 19 26">
    <original>T</original>
    <variation>A</variation>
    <location>
        <position position="221"/>
    </location>
</feature>
<feature type="mutagenesis site" description="Abolishes respiratory growth." evidence="24">
    <original>D</original>
    <variation>K</variation>
    <location>
        <position position="313"/>
    </location>
</feature>
<feature type="mutagenesis site" description="Loss of mitochondrial fusion." evidence="18">
    <original>D</original>
    <variation>A</variation>
    <location>
        <position position="320"/>
    </location>
</feature>
<feature type="mutagenesis site" description="Impairs GTP Hydrolysis and abolishes fusion function." evidence="15">
    <original>V</original>
    <variation>T</variation>
    <location>
        <position position="327"/>
    </location>
</feature>
<feature type="mutagenesis site" description="Abolishes respiratory growth. Restores respiratory growth; when associated with D-464." evidence="24">
    <original>D</original>
    <variation>K</variation>
    <location>
        <position position="335"/>
    </location>
</feature>
<feature type="mutagenesis site" description="No effect." evidence="26">
    <original>K</original>
    <variation>A</variation>
    <location>
        <position position="371"/>
    </location>
</feature>
<feature type="mutagenesis site" description="Leads to accelerated proteolysis." evidence="21">
    <original>K</original>
    <variation>R</variation>
    <location>
        <position position="398"/>
    </location>
</feature>
<feature type="mutagenesis site" description="Abolishes respiratory growth. Restores respiratory growth; when associated with K-335." evidence="24">
    <original>K</original>
    <variation>D</variation>
    <location>
        <position position="464"/>
    </location>
</feature>
<feature type="mutagenesis site" description="Abolishes fusion function." evidence="21">
    <original>K</original>
    <variation>R</variation>
    <location>
        <position position="464"/>
    </location>
</feature>
<feature type="mutagenesis site" description="No effect." evidence="24">
    <original>Y</original>
    <variation>A</variation>
    <variation>K</variation>
    <location>
        <position position="490"/>
    </location>
</feature>
<feature type="mutagenesis site" description="Abolishes fusion function." evidence="12">
    <original>Y</original>
    <variation>P</variation>
    <location>
        <position position="490"/>
    </location>
</feature>
<feature type="mutagenesis site" description="Abolishes fusion function; when associated with Ala-504." evidence="12">
    <original>L</original>
    <variation>A</variation>
    <location>
        <position position="501"/>
    </location>
</feature>
<feature type="mutagenesis site" description="Abolishes fusion function; when associated with Ala-501." evidence="12">
    <original>L</original>
    <variation>A</variation>
    <location>
        <position position="504"/>
    </location>
</feature>
<feature type="mutagenesis site" description="Abolishes fusion function." evidence="12">
    <original>L</original>
    <variation>P</variation>
    <location>
        <position position="518"/>
    </location>
</feature>
<feature type="mutagenesis site" description="Abolishes respiratory growth. Restores respiratory growth; when associated with D-780." evidence="24">
    <original>D</original>
    <variation>H</variation>
    <location>
        <position position="523"/>
    </location>
</feature>
<feature type="mutagenesis site" description="Abolishes fusion function." evidence="12">
    <original>K</original>
    <variation>P</variation>
    <location>
        <position position="538"/>
    </location>
</feature>
<feature type="mutagenesis site" description="Abolishes fusion function." evidence="12">
    <original>Y</original>
    <variation>P</variation>
    <location>
        <position position="769"/>
    </location>
</feature>
<feature type="mutagenesis site" description="Abolishes fusion function." evidence="12">
    <original>L</original>
    <variation>P</variation>
    <location>
        <position position="773"/>
    </location>
</feature>
<feature type="mutagenesis site" description="No effect. Restores respiratory growth; when associated with H-523." evidence="24">
    <original>H</original>
    <variation>D</variation>
    <location>
        <position position="780"/>
    </location>
</feature>
<feature type="mutagenesis site" description="No effect." evidence="24">
    <original>E</original>
    <variation>A</variation>
    <variation>R</variation>
    <location>
        <position position="818"/>
    </location>
</feature>
<feature type="mutagenesis site" description="Abolishes respiratory growth." evidence="24">
    <original>E</original>
    <variation>P</variation>
    <location>
        <position position="818"/>
    </location>
</feature>
<feature type="mutagenesis site" description="No effect." evidence="24">
    <original>L</original>
    <variation>A</variation>
    <location>
        <position position="819"/>
    </location>
</feature>
<feature type="mutagenesis site" description="Abolishes fusion function." evidence="12 24">
    <original>L</original>
    <variation>P</variation>
    <variation>E</variation>
    <location>
        <position position="819"/>
    </location>
</feature>
<proteinExistence type="evidence at protein level"/>
<gene>
    <name type="primary">FZO1</name>
    <name type="ordered locus">YBR179C</name>
    <name type="ORF">YBR1241</name>
</gene>
<comment type="function">
    <text evidence="4 5 10 11 15 16 17 18 20 23 25 26">Essential transmembrane GTPase, which mediates mitochondrial fusion (PubMed:10562274, PubMed:11266460, PubMed:15297626, PubMed:15760898, PubMed:16624808, PubMed:19812251, PubMed:21385840, PubMed:21502136, PubMed:23317502, PubMed:27253069, PubMed:9685359, PubMed:9786948). Fusion proceeds through several steps; first mitochondria are tethered together, then brought into close contact, followed by the formation of a docking ring around contact areas, and finally membrane fusion (PubMed:27253069). Fusion of mitochondria occurs in many cell types and constitutes an important step in mitochondrial morphology, which is balanced between fusion and fission, mediated by FZO1 and DNM1, respectively (PubMed:10562274). Functions antagonistically with DNM1 (PubMed:10562274). Probably acts by forming membrane contact sites that mediate mitochondrial membrane fusion (PubMed:27253069). Mitochondrial docking and fusion requires GTP hydrolysis (PubMed:15297626, PubMed:19812251, PubMed:27253069). Mitochondrial fusion also promotes increased lifespan.</text>
</comment>
<comment type="catalytic activity">
    <reaction evidence="15">
        <text>GTP + H2O = GDP + phosphate + H(+)</text>
        <dbReference type="Rhea" id="RHEA:19669"/>
        <dbReference type="ChEBI" id="CHEBI:15377"/>
        <dbReference type="ChEBI" id="CHEBI:15378"/>
        <dbReference type="ChEBI" id="CHEBI:37565"/>
        <dbReference type="ChEBI" id="CHEBI:43474"/>
        <dbReference type="ChEBI" id="CHEBI:58189"/>
    </reaction>
</comment>
<comment type="subunit">
    <text evidence="6 9 12 13 15 18 19 21 22 25">Homodimer (PubMed:16624808, PubMed:19812251, PubMed:21385840). Dimerization depends on GTP binding (PubMed:16624808, PubMed:19812251, PubMed:21385840). Component of a large multiprotein complex of 800 kDa (PubMed:9685359). Binds the cytoplasmic domain of UGO1 which binds MGM1 through its intermembrane space domain (PubMed:12808034, PubMed:15087460). Interacts with MDM30 (PubMed:16735578, PubMed:21385840, PubMed:21502136). Interacts with UBP2 and UBP12 (PubMed:23317502). Interacts (when ubiquitinated) with DOA1; the interaction recruits FZO1 to CDC48 and promotes FZO1 proteasomal degradation (PubMed:27044889).</text>
</comment>
<comment type="interaction">
    <interactant intactId="EBI-20900">
        <id>P38297</id>
    </interactant>
    <interactant intactId="EBI-10865">
        <id>P32266</id>
        <label>MGM1</label>
    </interactant>
    <organismsDiffer>false</organismsDiffer>
    <experiments>2</experiments>
</comment>
<comment type="interaction">
    <interactant intactId="EBI-20900">
        <id>P38297</id>
    </interactant>
    <interactant intactId="EBI-32955">
        <id>Q03327</id>
        <label>UGO1</label>
    </interactant>
    <organismsDiffer>false</organismsDiffer>
    <experiments>2</experiments>
</comment>
<comment type="subcellular location">
    <subcellularLocation>
        <location evidence="5 7 22 23 25 26">Mitochondrion outer membrane</location>
        <topology evidence="5 7 25 26">Multi-pass membrane protein</topology>
    </subcellularLocation>
    <text evidence="23">Detected at the periphery of mitochondrial contact sites that form before mitochondrial fusion.</text>
</comment>
<comment type="domain">
    <text evidence="12">The GTPase domain may regulate the interaction with UGO1 since FZO1 lacking the GTPase domain binds 5-fold higher amount of UGO1 than full-length FZO1. The coiled-coil heptad repeat domains HRN, HR1 and HR2 are required for the oligomerization and function in mitochondrial fusion.</text>
</comment>
<comment type="PTM">
    <text evidence="14 15 18 19 21 22">Ubiquitinated at Lys-398 and Lys-464 (PubMed:19812251, PubMed:23317502, PubMed:27044889). MDM30 and UGO1 are involved in ubiquitination (PubMed:18353967, PubMed:21385840, PubMed:21502136). Deubiquitinated by UBP2 and UBP12 (PubMed:23317502). UBP2 and UBP12 recognize distinct ubiquitin chains on FZO1 that have opposing effects on mitochondrial fusion (PubMed:23317502). UBP2 removes ubiquitin chains that initiate proteolysis of FZO1 and inhibit fusion (PubMed:23317502). UBP12 recognizes ubiquitin chains that stabilize FZO1 and promote mitochondrial fusion. UBP12 deubiquitylates FZO1 only after oligomerization (PubMed:23317502).</text>
</comment>
<comment type="miscellaneous">
    <text evidence="8">Present with 1000 molecules/cell in log phase SD medium.</text>
</comment>
<comment type="similarity">
    <text evidence="27">Belongs to the TRAFAC class dynamin-like GTPase superfamily. Dynamin/Fzo/YdjA family. Mitofusin subfamily.</text>
</comment>
<organism>
    <name type="scientific">Saccharomyces cerevisiae (strain ATCC 204508 / S288c)</name>
    <name type="common">Baker's yeast</name>
    <dbReference type="NCBI Taxonomy" id="559292"/>
    <lineage>
        <taxon>Eukaryota</taxon>
        <taxon>Fungi</taxon>
        <taxon>Dikarya</taxon>
        <taxon>Ascomycota</taxon>
        <taxon>Saccharomycotina</taxon>
        <taxon>Saccharomycetes</taxon>
        <taxon>Saccharomycetales</taxon>
        <taxon>Saccharomycetaceae</taxon>
        <taxon>Saccharomyces</taxon>
    </lineage>
</organism>
<keyword id="KW-0175">Coiled coil</keyword>
<keyword id="KW-0342">GTP-binding</keyword>
<keyword id="KW-0378">Hydrolase</keyword>
<keyword id="KW-1017">Isopeptide bond</keyword>
<keyword id="KW-0472">Membrane</keyword>
<keyword id="KW-0496">Mitochondrion</keyword>
<keyword id="KW-1000">Mitochondrion outer membrane</keyword>
<keyword id="KW-0547">Nucleotide-binding</keyword>
<keyword id="KW-1185">Reference proteome</keyword>
<keyword id="KW-0812">Transmembrane</keyword>
<keyword id="KW-1133">Transmembrane helix</keyword>
<keyword id="KW-0832">Ubl conjugation</keyword>
<accession>P38297</accession>
<accession>D6VQH3</accession>
<sequence length="855" mass="97808">MSEGKQQFKDSNKPHKDSTDQDDDAATIVPQTLTYSRNEGHFLGSNFHGVTDDRTTLFDGEEGRREDDLLPSLRSSNSKAHLISSQLSQWNYNNNRVLLKRSILKTQAFMDQLQEENNIRPIFIAANDEREKLHVLQLNIKLDGQYNTKEKNGFNIEKKALSKLFHSQIVSVTNHLNALKKRVDDVSSKVFITGDVNTGKSALCNSLLKQRLLPEDQLPCTNVFSEILEARENDGIEEVHAIPLNIAPTLKEAIDMYSIQNPKTYEIHTLKELPDLVPQNGKYALLKIYIKDDKRPASTSLLRNGTVDISLIDSPGLNMDSLQTAEVMSRQEEIDLVIFVVNAENQLTLSAKEFISLASREKKLMFFVVKKFDKIRDKQRCKELILKQIRDLSPETYKRAADFVHFVSKNGDELPHYHNENDNEDHGDRKPDDDPYSSSDPDPDFDSLEDSLRNFVLKKRSLSKLLPAKTYLSKLLSDIIMISKSNMKMYSEEEIKINEQLETLRPEILSARAKCNDLTTSVDQMAEQTITMTYNNTKEALLNALDVPLHEYPKYQGLGQIYDFIFSTEAFIANQIDESIGSSELFAKQKTDLLVKKIYEIGKNELGDDFMCERVFRSELMFRKRKHLIGKRLKVSLSITDLFAPTWKGFLSYLSWQKPVTAPLPDIEGQTNEGQIGLMKYLGLKNYPLTQYWSRPSLLFTSKIPTLTLYFLGSTKVVGNIILNGIKLSSWSSLKKLSVPVIVVGSLLGLTYLIHDLPRALPMNLSIKYKRKLQELDYIHLNAQRTSNEVRDVLRVPTREILRSCEIIMDKKQITKKELENKKESNLLSIKFFQSLYEGTVAQKLMVEEINLDID</sequence>